<feature type="chain" id="PRO_0000313899" description="tRNA U34 carboxymethyltransferase">
    <location>
        <begin position="1"/>
        <end position="325"/>
    </location>
</feature>
<feature type="binding site" evidence="1">
    <location>
        <position position="91"/>
    </location>
    <ligand>
        <name>carboxy-S-adenosyl-L-methionine</name>
        <dbReference type="ChEBI" id="CHEBI:134278"/>
    </ligand>
</feature>
<feature type="binding site" evidence="1">
    <location>
        <position position="105"/>
    </location>
    <ligand>
        <name>carboxy-S-adenosyl-L-methionine</name>
        <dbReference type="ChEBI" id="CHEBI:134278"/>
    </ligand>
</feature>
<feature type="binding site" evidence="1">
    <location>
        <position position="110"/>
    </location>
    <ligand>
        <name>carboxy-S-adenosyl-L-methionine</name>
        <dbReference type="ChEBI" id="CHEBI:134278"/>
    </ligand>
</feature>
<feature type="binding site" evidence="1">
    <location>
        <position position="130"/>
    </location>
    <ligand>
        <name>carboxy-S-adenosyl-L-methionine</name>
        <dbReference type="ChEBI" id="CHEBI:134278"/>
    </ligand>
</feature>
<feature type="binding site" evidence="1">
    <location>
        <begin position="152"/>
        <end position="154"/>
    </location>
    <ligand>
        <name>carboxy-S-adenosyl-L-methionine</name>
        <dbReference type="ChEBI" id="CHEBI:134278"/>
    </ligand>
</feature>
<feature type="binding site" evidence="1">
    <location>
        <position position="196"/>
    </location>
    <ligand>
        <name>carboxy-S-adenosyl-L-methionine</name>
        <dbReference type="ChEBI" id="CHEBI:134278"/>
    </ligand>
</feature>
<feature type="binding site" evidence="1">
    <location>
        <position position="200"/>
    </location>
    <ligand>
        <name>carboxy-S-adenosyl-L-methionine</name>
        <dbReference type="ChEBI" id="CHEBI:134278"/>
    </ligand>
</feature>
<feature type="binding site" evidence="1">
    <location>
        <position position="315"/>
    </location>
    <ligand>
        <name>carboxy-S-adenosyl-L-methionine</name>
        <dbReference type="ChEBI" id="CHEBI:134278"/>
    </ligand>
</feature>
<comment type="function">
    <text evidence="1">Catalyzes carboxymethyl transfer from carboxy-S-adenosyl-L-methionine (Cx-SAM) to 5-hydroxyuridine (ho5U) to form 5-carboxymethoxyuridine (cmo5U) at position 34 in tRNAs.</text>
</comment>
<comment type="catalytic activity">
    <reaction evidence="1">
        <text>carboxy-S-adenosyl-L-methionine + 5-hydroxyuridine(34) in tRNA = 5-carboxymethoxyuridine(34) in tRNA + S-adenosyl-L-homocysteine + H(+)</text>
        <dbReference type="Rhea" id="RHEA:52848"/>
        <dbReference type="Rhea" id="RHEA-COMP:13381"/>
        <dbReference type="Rhea" id="RHEA-COMP:13383"/>
        <dbReference type="ChEBI" id="CHEBI:15378"/>
        <dbReference type="ChEBI" id="CHEBI:57856"/>
        <dbReference type="ChEBI" id="CHEBI:134278"/>
        <dbReference type="ChEBI" id="CHEBI:136877"/>
        <dbReference type="ChEBI" id="CHEBI:136879"/>
    </reaction>
</comment>
<comment type="subunit">
    <text evidence="1">Homotetramer.</text>
</comment>
<comment type="similarity">
    <text evidence="1">Belongs to the class I-like SAM-binding methyltransferase superfamily. CmoB family.</text>
</comment>
<comment type="sequence caution" evidence="2">
    <conflict type="erroneous initiation">
        <sequence resource="EMBL-CDS" id="ABK39690"/>
    </conflict>
</comment>
<keyword id="KW-1185">Reference proteome</keyword>
<keyword id="KW-0808">Transferase</keyword>
<keyword id="KW-0819">tRNA processing</keyword>
<evidence type="ECO:0000255" key="1">
    <source>
        <dbReference type="HAMAP-Rule" id="MF_01590"/>
    </source>
</evidence>
<evidence type="ECO:0000305" key="2"/>
<gene>
    <name evidence="1" type="primary">cmoB</name>
    <name type="ordered locus">AHA_1518</name>
</gene>
<name>CMOB_AERHH</name>
<dbReference type="EC" id="2.5.1.-" evidence="1"/>
<dbReference type="EMBL" id="CP000462">
    <property type="protein sequence ID" value="ABK39690.1"/>
    <property type="status" value="ALT_INIT"/>
    <property type="molecule type" value="Genomic_DNA"/>
</dbReference>
<dbReference type="RefSeq" id="WP_041216623.1">
    <property type="nucleotide sequence ID" value="NC_008570.1"/>
</dbReference>
<dbReference type="RefSeq" id="YP_856056.1">
    <property type="nucleotide sequence ID" value="NC_008570.1"/>
</dbReference>
<dbReference type="SMR" id="A0KIF5"/>
<dbReference type="STRING" id="380703.AHA_1518"/>
<dbReference type="EnsemblBacteria" id="ABK39690">
    <property type="protein sequence ID" value="ABK39690"/>
    <property type="gene ID" value="AHA_1518"/>
</dbReference>
<dbReference type="GeneID" id="4487591"/>
<dbReference type="KEGG" id="aha:AHA_1518"/>
<dbReference type="PATRIC" id="fig|380703.7.peg.1531"/>
<dbReference type="eggNOG" id="COG0500">
    <property type="taxonomic scope" value="Bacteria"/>
</dbReference>
<dbReference type="HOGENOM" id="CLU_052665_0_0_6"/>
<dbReference type="OrthoDB" id="9773188at2"/>
<dbReference type="Proteomes" id="UP000000756">
    <property type="component" value="Chromosome"/>
</dbReference>
<dbReference type="GO" id="GO:0008168">
    <property type="term" value="F:methyltransferase activity"/>
    <property type="evidence" value="ECO:0007669"/>
    <property type="project" value="TreeGrafter"/>
</dbReference>
<dbReference type="GO" id="GO:0016765">
    <property type="term" value="F:transferase activity, transferring alkyl or aryl (other than methyl) groups"/>
    <property type="evidence" value="ECO:0007669"/>
    <property type="project" value="UniProtKB-UniRule"/>
</dbReference>
<dbReference type="GO" id="GO:0002098">
    <property type="term" value="P:tRNA wobble uridine modification"/>
    <property type="evidence" value="ECO:0007669"/>
    <property type="project" value="InterPro"/>
</dbReference>
<dbReference type="CDD" id="cd02440">
    <property type="entry name" value="AdoMet_MTases"/>
    <property type="match status" value="1"/>
</dbReference>
<dbReference type="Gene3D" id="3.40.50.150">
    <property type="entry name" value="Vaccinia Virus protein VP39"/>
    <property type="match status" value="1"/>
</dbReference>
<dbReference type="HAMAP" id="MF_01590">
    <property type="entry name" value="tRNA_carboxymethyltr_CmoB"/>
    <property type="match status" value="1"/>
</dbReference>
<dbReference type="InterPro" id="IPR010017">
    <property type="entry name" value="CmoB"/>
</dbReference>
<dbReference type="InterPro" id="IPR027555">
    <property type="entry name" value="Mo5U34_MeTrfas-like"/>
</dbReference>
<dbReference type="InterPro" id="IPR029063">
    <property type="entry name" value="SAM-dependent_MTases_sf"/>
</dbReference>
<dbReference type="NCBIfam" id="NF011650">
    <property type="entry name" value="PRK15068.1"/>
    <property type="match status" value="1"/>
</dbReference>
<dbReference type="NCBIfam" id="TIGR00452">
    <property type="entry name" value="tRNA 5-methoxyuridine(34)/uridine 5-oxyacetic acid(34) synthase CmoB"/>
    <property type="match status" value="1"/>
</dbReference>
<dbReference type="PANTHER" id="PTHR43464">
    <property type="entry name" value="METHYLTRANSFERASE"/>
    <property type="match status" value="1"/>
</dbReference>
<dbReference type="PANTHER" id="PTHR43464:SF95">
    <property type="entry name" value="TRNA U34 CARBOXYMETHYLTRANSFERASE"/>
    <property type="match status" value="1"/>
</dbReference>
<dbReference type="Pfam" id="PF08003">
    <property type="entry name" value="Methyltransf_9"/>
    <property type="match status" value="1"/>
</dbReference>
<dbReference type="SUPFAM" id="SSF53335">
    <property type="entry name" value="S-adenosyl-L-methionine-dependent methyltransferases"/>
    <property type="match status" value="1"/>
</dbReference>
<proteinExistence type="inferred from homology"/>
<accession>A0KIF5</accession>
<protein>
    <recommendedName>
        <fullName evidence="1">tRNA U34 carboxymethyltransferase</fullName>
        <ecNumber evidence="1">2.5.1.-</ecNumber>
    </recommendedName>
</protein>
<reference key="1">
    <citation type="journal article" date="2006" name="J. Bacteriol.">
        <title>Genome sequence of Aeromonas hydrophila ATCC 7966T: jack of all trades.</title>
        <authorList>
            <person name="Seshadri R."/>
            <person name="Joseph S.W."/>
            <person name="Chopra A.K."/>
            <person name="Sha J."/>
            <person name="Shaw J."/>
            <person name="Graf J."/>
            <person name="Haft D.H."/>
            <person name="Wu M."/>
            <person name="Ren Q."/>
            <person name="Rosovitz M.J."/>
            <person name="Madupu R."/>
            <person name="Tallon L."/>
            <person name="Kim M."/>
            <person name="Jin S."/>
            <person name="Vuong H."/>
            <person name="Stine O.C."/>
            <person name="Ali A."/>
            <person name="Horneman A.J."/>
            <person name="Heidelberg J.F."/>
        </authorList>
    </citation>
    <scope>NUCLEOTIDE SEQUENCE [LARGE SCALE GENOMIC DNA]</scope>
    <source>
        <strain>ATCC 7966 / DSM 30187 / BCRC 13018 / CCUG 14551 / JCM 1027 / KCTC 2358 / NCIMB 9240 / NCTC 8049</strain>
    </source>
</reference>
<organism>
    <name type="scientific">Aeromonas hydrophila subsp. hydrophila (strain ATCC 7966 / DSM 30187 / BCRC 13018 / CCUG 14551 / JCM 1027 / KCTC 2358 / NCIMB 9240 / NCTC 8049)</name>
    <dbReference type="NCBI Taxonomy" id="380703"/>
    <lineage>
        <taxon>Bacteria</taxon>
        <taxon>Pseudomonadati</taxon>
        <taxon>Pseudomonadota</taxon>
        <taxon>Gammaproteobacteria</taxon>
        <taxon>Aeromonadales</taxon>
        <taxon>Aeromonadaceae</taxon>
        <taxon>Aeromonas</taxon>
    </lineage>
</organism>
<sequence length="325" mass="37208">MIDFANFYQLIAKNRLSHWLHTLPAQLHAWQHDNQHGDLPRWNRALNKLPQVAPGHIELHSRVEIGSAESLGEGERKKVESLLRHFMPWRKGPFTVHGIHIDTEWRSDWKWDRVLPHISPLAGRYVLDVGCGSGYHLWRMVGEGAKLAVGIDPSPLFLCQFEAIRHFAGNDQRAHLLPLGIQELPELRAFDTVFSMGVLYHRKSPIEHIEQLRNQLKDDGELVLETLVIDGGVNDVLVPTDRYGKMRNVWFIPSSAALKLWVERCGFTDVRIVDENMTSTDEQRRTDWMINESLSDYLDPTNPALTVEGHPAPKRAVLIARKAKD</sequence>